<protein>
    <recommendedName>
        <fullName evidence="2">HTH-type transcriptional regulator BetI</fullName>
    </recommendedName>
</protein>
<feature type="chain" id="PRO_0000070584" description="HTH-type transcriptional regulator BetI">
    <location>
        <begin position="1"/>
        <end position="197"/>
    </location>
</feature>
<feature type="domain" description="HTH tetR-type" evidence="2">
    <location>
        <begin position="8"/>
        <end position="68"/>
    </location>
</feature>
<feature type="DNA-binding region" description="H-T-H motif" evidence="2">
    <location>
        <begin position="31"/>
        <end position="50"/>
    </location>
</feature>
<reference key="1">
    <citation type="journal article" date="2000" name="Nature">
        <title>Complete genome sequence of Pseudomonas aeruginosa PAO1, an opportunistic pathogen.</title>
        <authorList>
            <person name="Stover C.K."/>
            <person name="Pham X.-Q.T."/>
            <person name="Erwin A.L."/>
            <person name="Mizoguchi S.D."/>
            <person name="Warrener P."/>
            <person name="Hickey M.J."/>
            <person name="Brinkman F.S.L."/>
            <person name="Hufnagle W.O."/>
            <person name="Kowalik D.J."/>
            <person name="Lagrou M."/>
            <person name="Garber R.L."/>
            <person name="Goltry L."/>
            <person name="Tolentino E."/>
            <person name="Westbrock-Wadman S."/>
            <person name="Yuan Y."/>
            <person name="Brody L.L."/>
            <person name="Coulter S.N."/>
            <person name="Folger K.R."/>
            <person name="Kas A."/>
            <person name="Larbig K."/>
            <person name="Lim R.M."/>
            <person name="Smith K.A."/>
            <person name="Spencer D.H."/>
            <person name="Wong G.K.-S."/>
            <person name="Wu Z."/>
            <person name="Paulsen I.T."/>
            <person name="Reizer J."/>
            <person name="Saier M.H. Jr."/>
            <person name="Hancock R.E.W."/>
            <person name="Lory S."/>
            <person name="Olson M.V."/>
        </authorList>
    </citation>
    <scope>NUCLEOTIDE SEQUENCE [LARGE SCALE GENOMIC DNA]</scope>
    <source>
        <strain>ATCC 15692 / DSM 22644 / CIP 104116 / JCM 14847 / LMG 12228 / 1C / PRS 101 / PAO1</strain>
    </source>
</reference>
<accession>Q9HTJ0</accession>
<sequence>MPKVGMQPIRRSQLIHATLEAVDQVGMGDASIALIARLAGVSNGIISHYFQDKNGLLEATMRHLLSALSKAVRERRAALYDDSPRAHLRAIVEGNFDDSQVNGPAMKTWLAFWATSMHQPALRRLQRVNDHRLYSNLCYQFRRQLSADDARAAARGLAALIDGLWLRGALTGDAFDTDEALNIAYDYLDQQLAKQSG</sequence>
<gene>
    <name evidence="2" type="primary">betI</name>
    <name type="ordered locus">PA5374</name>
</gene>
<evidence type="ECO:0000250" key="1"/>
<evidence type="ECO:0000255" key="2">
    <source>
        <dbReference type="HAMAP-Rule" id="MF_00768"/>
    </source>
</evidence>
<name>BETI_PSEAE</name>
<organism>
    <name type="scientific">Pseudomonas aeruginosa (strain ATCC 15692 / DSM 22644 / CIP 104116 / JCM 14847 / LMG 12228 / 1C / PRS 101 / PAO1)</name>
    <dbReference type="NCBI Taxonomy" id="208964"/>
    <lineage>
        <taxon>Bacteria</taxon>
        <taxon>Pseudomonadati</taxon>
        <taxon>Pseudomonadota</taxon>
        <taxon>Gammaproteobacteria</taxon>
        <taxon>Pseudomonadales</taxon>
        <taxon>Pseudomonadaceae</taxon>
        <taxon>Pseudomonas</taxon>
    </lineage>
</organism>
<comment type="function">
    <text evidence="1">Repressor involved in the biosynthesis of the osmoprotectant glycine betaine. It represses transcription of the choline transporter BetT and the genes of BetAB involved in the synthesis of glycine betaine (By similarity).</text>
</comment>
<comment type="pathway">
    <text>Amine and polyamine biosynthesis; betaine biosynthesis via choline pathway [regulation].</text>
</comment>
<dbReference type="EMBL" id="AE004091">
    <property type="protein sequence ID" value="AAG08759.1"/>
    <property type="molecule type" value="Genomic_DNA"/>
</dbReference>
<dbReference type="PIR" id="G82973">
    <property type="entry name" value="G82973"/>
</dbReference>
<dbReference type="RefSeq" id="NP_254061.1">
    <property type="nucleotide sequence ID" value="NC_002516.2"/>
</dbReference>
<dbReference type="RefSeq" id="WP_003096684.1">
    <property type="nucleotide sequence ID" value="NZ_QZGE01000031.1"/>
</dbReference>
<dbReference type="SMR" id="Q9HTJ0"/>
<dbReference type="FunCoup" id="Q9HTJ0">
    <property type="interactions" value="124"/>
</dbReference>
<dbReference type="STRING" id="208964.PA5374"/>
<dbReference type="PaxDb" id="208964-PA5374"/>
<dbReference type="DNASU" id="881620"/>
<dbReference type="GeneID" id="77223910"/>
<dbReference type="GeneID" id="881620"/>
<dbReference type="KEGG" id="pae:PA5374"/>
<dbReference type="PATRIC" id="fig|208964.12.peg.5631"/>
<dbReference type="PseudoCAP" id="PA5374"/>
<dbReference type="HOGENOM" id="CLU_069356_15_4_6"/>
<dbReference type="InParanoid" id="Q9HTJ0"/>
<dbReference type="OrthoDB" id="7618612at2"/>
<dbReference type="PhylomeDB" id="Q9HTJ0"/>
<dbReference type="BioCyc" id="PAER208964:G1FZ6-5501-MONOMER"/>
<dbReference type="UniPathway" id="UPA00529"/>
<dbReference type="Proteomes" id="UP000002438">
    <property type="component" value="Chromosome"/>
</dbReference>
<dbReference type="GO" id="GO:0003700">
    <property type="term" value="F:DNA-binding transcription factor activity"/>
    <property type="evidence" value="ECO:0000318"/>
    <property type="project" value="GO_Central"/>
</dbReference>
<dbReference type="GO" id="GO:0000976">
    <property type="term" value="F:transcription cis-regulatory region binding"/>
    <property type="evidence" value="ECO:0000318"/>
    <property type="project" value="GO_Central"/>
</dbReference>
<dbReference type="GO" id="GO:0019285">
    <property type="term" value="P:glycine betaine biosynthetic process from choline"/>
    <property type="evidence" value="ECO:0007669"/>
    <property type="project" value="UniProtKB-UniRule"/>
</dbReference>
<dbReference type="GO" id="GO:0045892">
    <property type="term" value="P:negative regulation of DNA-templated transcription"/>
    <property type="evidence" value="ECO:0007669"/>
    <property type="project" value="UniProtKB-UniRule"/>
</dbReference>
<dbReference type="GO" id="GO:0006355">
    <property type="term" value="P:regulation of DNA-templated transcription"/>
    <property type="evidence" value="ECO:0000318"/>
    <property type="project" value="GO_Central"/>
</dbReference>
<dbReference type="Gene3D" id="1.10.357.10">
    <property type="entry name" value="Tetracycline Repressor, domain 2"/>
    <property type="match status" value="1"/>
</dbReference>
<dbReference type="HAMAP" id="MF_00768">
    <property type="entry name" value="HTH_type_BetI"/>
    <property type="match status" value="1"/>
</dbReference>
<dbReference type="InterPro" id="IPR039538">
    <property type="entry name" value="BetI_C"/>
</dbReference>
<dbReference type="InterPro" id="IPR023772">
    <property type="entry name" value="DNA-bd_HTH_TetR-type_CS"/>
</dbReference>
<dbReference type="InterPro" id="IPR009057">
    <property type="entry name" value="Homeodomain-like_sf"/>
</dbReference>
<dbReference type="InterPro" id="IPR050109">
    <property type="entry name" value="HTH-type_TetR-like_transc_reg"/>
</dbReference>
<dbReference type="InterPro" id="IPR001647">
    <property type="entry name" value="HTH_TetR"/>
</dbReference>
<dbReference type="InterPro" id="IPR036271">
    <property type="entry name" value="Tet_transcr_reg_TetR-rel_C_sf"/>
</dbReference>
<dbReference type="InterPro" id="IPR017757">
    <property type="entry name" value="Tscrpt_rep_BetI"/>
</dbReference>
<dbReference type="NCBIfam" id="TIGR03384">
    <property type="entry name" value="betaine_BetI"/>
    <property type="match status" value="1"/>
</dbReference>
<dbReference type="NCBIfam" id="NF001978">
    <property type="entry name" value="PRK00767.1"/>
    <property type="match status" value="1"/>
</dbReference>
<dbReference type="PANTHER" id="PTHR30055:SF234">
    <property type="entry name" value="HTH-TYPE TRANSCRIPTIONAL REGULATOR BETI"/>
    <property type="match status" value="1"/>
</dbReference>
<dbReference type="PANTHER" id="PTHR30055">
    <property type="entry name" value="HTH-TYPE TRANSCRIPTIONAL REGULATOR RUTR"/>
    <property type="match status" value="1"/>
</dbReference>
<dbReference type="Pfam" id="PF13977">
    <property type="entry name" value="TetR_C_6"/>
    <property type="match status" value="1"/>
</dbReference>
<dbReference type="Pfam" id="PF00440">
    <property type="entry name" value="TetR_N"/>
    <property type="match status" value="1"/>
</dbReference>
<dbReference type="SUPFAM" id="SSF46689">
    <property type="entry name" value="Homeodomain-like"/>
    <property type="match status" value="1"/>
</dbReference>
<dbReference type="SUPFAM" id="SSF48498">
    <property type="entry name" value="Tetracyclin repressor-like, C-terminal domain"/>
    <property type="match status" value="1"/>
</dbReference>
<dbReference type="PROSITE" id="PS01081">
    <property type="entry name" value="HTH_TETR_1"/>
    <property type="match status" value="1"/>
</dbReference>
<dbReference type="PROSITE" id="PS50977">
    <property type="entry name" value="HTH_TETR_2"/>
    <property type="match status" value="1"/>
</dbReference>
<proteinExistence type="inferred from homology"/>
<keyword id="KW-0238">DNA-binding</keyword>
<keyword id="KW-1185">Reference proteome</keyword>
<keyword id="KW-0678">Repressor</keyword>
<keyword id="KW-0804">Transcription</keyword>
<keyword id="KW-0805">Transcription regulation</keyword>